<gene>
    <name evidence="7" type="primary">men1</name>
</gene>
<reference key="1">
    <citation type="journal article" date="2019" name="Org. Biomol. Chem.">
        <title>Heterologous biosynthesis of a fungal macrocyclic polylactone requires only two iterative polyketide synthases.</title>
        <authorList>
            <person name="Bunnak W."/>
            <person name="Wonnapinij P."/>
            <person name="Sriboonlert A."/>
            <person name="Lazarus C.M."/>
            <person name="Wattana-Amorn P."/>
        </authorList>
    </citation>
    <scope>NUCLEOTIDE SEQUENCE [MRNA]</scope>
    <scope>INDUCTION</scope>
    <scope>DOMAIN</scope>
    <scope>FUNCTION</scope>
    <scope>CATALYTIC ACTIVITY</scope>
    <source>
        <strain>BCC 4162</strain>
    </source>
</reference>
<name>MEN1_MENTH</name>
<comment type="function">
    <text evidence="6">Partially reducing polyketide synthase; part of the gene cluster that mediates the biosynthesis of menisporopsin A, a bioactive macrocyclic polylactone (PubMed:30556556). The biosynthesis of menisporopsin A is performed by a reducing (man1) and a non-reducing (men2) polyketide synthase that catalyze the formation of each menisporopsin A subunits, while the esterification and cyclolactonization activities are probably peformed by the unusual thioesterase domain of men2 (PubMed:30556556). First, a reduced diketide intermediate, 3-hydroxybutyryl-S-ACP is produced by men1 and transferred to men2; this is followed by a second reduced diketide which is further elongated using 3 units of malonyl-coA to form a reduced pentaketide. The cyclization of this intermediate by the PT domain forms the second subunit, 2,4-dihydroxy-6-(2-hydroxy-n-propyl)benzoyl-S-ACP (PubMed:30556556). The TE domain of men2 then esterifies the secondary hydroxyl group on the side chain of the second subunit with the acyl-TE of the first subunit to form the first ester intermediate (PubMed:30556556). This process occurs iteratively to form a linear tetraester intermediate (PubMed:30556556). The final subunit is formed by a similar process, except that an extra malonyl-CoA is required in an additional elongation step to form a reduced hexaketide intermediate, and the carbonyl group next to the secondary hydroxyl group is reduced by a trans-acting ketoreductase (PubMed:30556556). Again, the PT domain catalyzes cyclization to form the largest subunit, 2,4-dihydroxy-6-(2,4-dihydroxy-n-pentyl) benzoyl-S-ACP (PubMed:30556556). Then the linear pentaester intermediate is formed (PubMed:30556556). In this step, if the intermediate transfer rate is slow, intra- molecular cyclization involving the secondary hydroxyl group of the pentaester intermediate may occur to form menisporopsin B (PubMed:30556556). Alternatively, transfer of the pentaester intermediate to the TE domain would allow cyclolactonization to be catalyzed by the TE to form menisporopsin A (PubMed:30556556).</text>
</comment>
<comment type="cofactor">
    <cofactor evidence="2">
        <name>pantetheine 4'-phosphate</name>
        <dbReference type="ChEBI" id="CHEBI:47942"/>
    </cofactor>
</comment>
<comment type="pathway">
    <text evidence="6">Secondary metabolite biosynthesis.</text>
</comment>
<comment type="induction">
    <text evidence="6">Exhibits highest expression levels during the menisporopsin A production phase.</text>
</comment>
<comment type="domain">
    <text evidence="6 8">Multidomain protein; including a ketosynthase (KS) that catalyzes repeated decarboxylative condensation to elongate the polyketide backbone; a malonyl-CoA:ACP transacylase (MAT) that selects and transfers the extender unit malonyl-CoA; a dehydratase (DH) domain that reduces hydroxyl groups to enoyl groups; an enoylreductase (ER) domain that reduces enoyl groups to alkyl group; a ketoreductase (KR) domain that catalyzes beta-ketoreduction steps; and an acyl-carrier protein (ACP) that serves as the tether of the growing and completed polyketide via its phosphopantetheinyl arm (Probable). The structure of menisporopsin A indicates that reduction of beta-carbonyl intermediates goes no further than production of hydroxyl groups, indicating that the DH and ER domains of men1 are inactive (PubMed:30556556).</text>
</comment>
<proteinExistence type="evidence at protein level"/>
<organism>
    <name type="scientific">Menisporopsis theobromae</name>
    <dbReference type="NCBI Taxonomy" id="752604"/>
    <lineage>
        <taxon>Eukaryota</taxon>
        <taxon>Fungi</taxon>
        <taxon>Dikarya</taxon>
        <taxon>Ascomycota</taxon>
        <taxon>Pezizomycotina</taxon>
        <taxon>Sordariomycetes</taxon>
        <taxon>Sordariomycetidae</taxon>
        <taxon>Chaetosphaeriales</taxon>
        <taxon>Chaetosphaeriaceae</taxon>
        <taxon>Menisporopsis</taxon>
    </lineage>
</organism>
<accession>A0A6F9DXA0</accession>
<feature type="chain" id="PRO_0000457625" description="Partially reducing polyketide synthase men1">
    <location>
        <begin position="1"/>
        <end position="2598"/>
    </location>
</feature>
<feature type="domain" description="Ketosynthase family 3 (KS3)" evidence="3 8">
    <location>
        <begin position="7"/>
        <end position="435"/>
    </location>
</feature>
<feature type="domain" description="Malonyl-CoA:ACP transacylase (MAT)" evidence="1 8">
    <location>
        <begin position="611"/>
        <end position="915"/>
    </location>
</feature>
<feature type="domain" description="PKS/mFAS DH" evidence="4">
    <location>
        <begin position="1008"/>
        <end position="1325"/>
    </location>
</feature>
<feature type="domain" description="Enoyl reductase (ER)" evidence="1 8">
    <location>
        <begin position="1886"/>
        <end position="2197"/>
    </location>
</feature>
<feature type="domain" description="Ketoreductase (KR)" evidence="1 8">
    <location>
        <begin position="2222"/>
        <end position="2399"/>
    </location>
</feature>
<feature type="domain" description="Carrier" evidence="1 2 8">
    <location>
        <begin position="2510"/>
        <end position="2587"/>
    </location>
</feature>
<feature type="region of interest" description="Disordered" evidence="5">
    <location>
        <begin position="450"/>
        <end position="490"/>
    </location>
</feature>
<feature type="region of interest" description="Disordered" evidence="5">
    <location>
        <begin position="537"/>
        <end position="557"/>
    </location>
</feature>
<feature type="region of interest" description="N-terminal hotdog fold" evidence="4">
    <location>
        <begin position="1008"/>
        <end position="1151"/>
    </location>
</feature>
<feature type="region of interest" description="Dehydratase (DH) domain" evidence="1 8">
    <location>
        <begin position="1009"/>
        <end position="1323"/>
    </location>
</feature>
<feature type="region of interest" description="C-terminal hotdog fold" evidence="4">
    <location>
        <begin position="1169"/>
        <end position="1325"/>
    </location>
</feature>
<feature type="compositionally biased region" description="Basic residues" evidence="5">
    <location>
        <begin position="450"/>
        <end position="459"/>
    </location>
</feature>
<feature type="compositionally biased region" description="Low complexity" evidence="5">
    <location>
        <begin position="474"/>
        <end position="490"/>
    </location>
</feature>
<feature type="active site" description="For beta-ketoacyl synthase activity" evidence="3">
    <location>
        <position position="181"/>
    </location>
</feature>
<feature type="active site" description="For beta-ketoacyl synthase activity" evidence="3">
    <location>
        <position position="316"/>
    </location>
</feature>
<feature type="active site" description="For beta-ketoacyl synthase activity" evidence="3">
    <location>
        <position position="358"/>
    </location>
</feature>
<feature type="modified residue" description="O-(pantetheine 4'-phosphoryl)serine" evidence="2">
    <location>
        <position position="2547"/>
    </location>
</feature>
<sequence length="2598" mass="276965">MGSVYDSQSIAIVGLSCRLPGDADNAERFWNLMSEGRSAISSVPADRWNSKGFRDPTGKKRQNTSLTDRAHFVKGDISEFDANFFTISKAEADSMDPQQRIMLEVAYEAFENAGLSMDSLAKSQTGCWVSSFSQDWKEMHFSDPDAAPKYAMSGMQPELLSNRVSYFFDLQGPSMTIETACSGSLVGLHVACQSLRAGDCETALVGGANLFLNQNMFLALSNQSFLAPDGLCKAFDASANGYGRGEGFAAVILKPIEKAIRDGDHIRAVIRGTGTNQDGRTKGLTMPNGHAQESLIRSTYAAAGLDLKDTAYFEAHGTGTQAGDFEELGAISRTVADARQKAGLEDLWVGSAKTNIGHLEAVAGLVGVLKAVLVLENGVIPPNLHFKNPNPRIPFGKWRIKVPTERIQWPSDGIRRVSVNSFGFGGSNAHAILDDADQYLSGRGIIRANGKSHHHHHQHQQQQLNGGNGGSNGVNGTSEVNGTSGVNGTTTAITNGSTHVNGTAATAATAAAQQIIILNSYDQEGLGRQREALLRYAEKQQQQQQQQGGQGGADPEKLLGDLAFTLNQKRSRLPWRTFFTASTLPELSRALEAASTFPAIRSGAATPRIAYVFTGQGAQWAQMGMDLLRFHVFRESVEAADRHLTQIGCPWSAVEELQRGDAESNIHISWYSQTLCTVIQVALVQLLESWNVRPRSVVGHSSGEMGAAFAIGALSREDAWTIAYWRGKLSSELTTIAPTQKGAMMAVGASHAQAQAWVDGLTRGRCVVACVNSPSSVTVSGDESGLDELAAMLKEQGVFARKLKVSTAYHSHHMKAVAEAYLDALKGVRTRTVPAEGGAPQMFTSVSESLVDPAELGPAHWVANLISPVLFSNTVRELARPKGPDDEASGSAVDLMVEIGPHAALRGPVTQILQSHGLPALDYYSVLSRGANSVDTALAVVGELVCRGVPVDLGAVNRAHLTAEQQLQADRRPSLVAELPPYAWNHAKTYWSESRISRELKYRPAPQLGLIGAPMPNFAPNEHQWRGFLRLADAAWIRDHKIQSSVIFPAGGFLAMAVEAAAQLAAAAQQEQPDRVVKGYKLRSVDISSAVRVADDSSVECIIQLRLSPGGAAAAEAAETWWDFSISTSPNAGEALKRNCSGSVAVEFGALAIVDAAQASYASAASACTISQEVDVFYRQLDSVGLGYGPTFQAIKSILHDSRGQGCGVLEITETDSASPKDPDARPHVVHPTTLESLFQMAYAAFGGRDGRVKRALMVTQIDELLVDATIPFAPGSRLLTSASAARQGFREIKADAFMLEAASESPKMAVKGLVCVEMPSASGMGGGGGGGLDADQASYSAMLSKFVWKPALELLSAPEQAKLLEDATRLPEDEAQRLASEATAELHAVKAVLESAQSKKIANLKLRNAAKWISQQLQASGIPGKPAENGAREGGSSSGFTAEVEKVLSGLAEADVLLGSKGSADHLVAQLPGMKMSLEKMYKLVNYMAHANPNLTVLEIVPGGAGVDFSLPLSAKDIPSTIQYTYASPSADNVQQMQERLGGGSGDSALALALAPRFRVLEIEQDLADQGLDPGSFDIVIGCNLLSNAVNVEKTLSQAKSLLTEGGKMALVELNKPSPAALPVLGILCDWWKRRDDGLRRPFTTDMVNESLAGQGFAIELATPDFTDPALQQSSLVLASCQPASAGKESAAQEVVSILVRKDSSEAVNALASQLSQACNGAKTVTWEAGVDFKGQHLISLLEFDTPLLDRLTEEDFGLVKQLITQAASLQWVTAIPEPHASTVMGLARVARFEVPSLRFQTVTLDPSSVLALDRAATLIIQAQKKSTSQDKEFKEVDSVLHVPRVDIDAPLNEQVTRLLLEEDVEPMPLGSGDAARKLCIRNPGMLNTLCFEIDSLPSTVLAEDEVEMQVKASGLSPKDVAICLGQVSDTALGFEASGIVTRVGAGVAQFQAGDKICMMARGAHRTVLRSKSALCQRIPEGMSFEQAAAVPLAHGAVYHALVNIARARSGQKILVAVSDAVVSEAAVQLAKHLGLEAFVTTESQDRTPLIGTKEDYGISDDHIFYSRDPTYVKEITRLTNGAGVDCVLSSVSGEALKHATSCLAPFGTFVDLGAKDVRSSAILDKHPEAMFAAINLERISELRPDMAGRIMDGTFALLREGAIKPVKLLAAYPASDLETAMQALHARSRQDKIVIAYSADQVVPVLHNPRESLRLPGDKTYLIAGGLGGIGRNIANLLVECGARHLAFVSRSGVTSEAQQKLVDNLTQRGAKIAVYRCNIGDAQSLEQTLARCSAEMPPVKGVIHSAVVFRDAVIHNMTYAQWHELMESKLGGSWNLHALTTSYDLDFFLCIGSFMAIIGGLSQSNYAAGGAFQDGLAHMRQSMGLPAATIDLGIVKGFGAVEEQGAVGHTLEWREPFGVDEDAVFALIKKALLGQMDKDGPGVPPQMINTVPTGGMVRESGVGQPYYFEDPRFAIMAAIGTRNADGADGQASVALKEQLAQAESPEEAARLVSAAVAAKVAKLMQVGAEEIDAGKPLHAYGVDSLVAIEYVHWAKKEVAAEITVFDVMASVPISAFASDLAKKGEWGTTAATTKQ</sequence>
<keyword id="KW-0012">Acyltransferase</keyword>
<keyword id="KW-0511">Multifunctional enzyme</keyword>
<keyword id="KW-0560">Oxidoreductase</keyword>
<keyword id="KW-0596">Phosphopantetheine</keyword>
<keyword id="KW-0597">Phosphoprotein</keyword>
<keyword id="KW-0808">Transferase</keyword>
<evidence type="ECO:0000255" key="1"/>
<evidence type="ECO:0000255" key="2">
    <source>
        <dbReference type="PROSITE-ProRule" id="PRU00258"/>
    </source>
</evidence>
<evidence type="ECO:0000255" key="3">
    <source>
        <dbReference type="PROSITE-ProRule" id="PRU01348"/>
    </source>
</evidence>
<evidence type="ECO:0000255" key="4">
    <source>
        <dbReference type="PROSITE-ProRule" id="PRU01363"/>
    </source>
</evidence>
<evidence type="ECO:0000256" key="5">
    <source>
        <dbReference type="SAM" id="MobiDB-lite"/>
    </source>
</evidence>
<evidence type="ECO:0000269" key="6">
    <source>
    </source>
</evidence>
<evidence type="ECO:0000303" key="7">
    <source>
    </source>
</evidence>
<evidence type="ECO:0000305" key="8">
    <source>
    </source>
</evidence>
<dbReference type="EC" id="2.3.1.-" evidence="6"/>
<dbReference type="EMBL" id="LR792528">
    <property type="protein sequence ID" value="CAB3277415.1"/>
    <property type="molecule type" value="mRNA"/>
</dbReference>
<dbReference type="SMR" id="A0A6F9DXA0"/>
<dbReference type="GO" id="GO:0004312">
    <property type="term" value="F:fatty acid synthase activity"/>
    <property type="evidence" value="ECO:0007669"/>
    <property type="project" value="TreeGrafter"/>
</dbReference>
<dbReference type="GO" id="GO:0016491">
    <property type="term" value="F:oxidoreductase activity"/>
    <property type="evidence" value="ECO:0007669"/>
    <property type="project" value="UniProtKB-KW"/>
</dbReference>
<dbReference type="GO" id="GO:0031177">
    <property type="term" value="F:phosphopantetheine binding"/>
    <property type="evidence" value="ECO:0007669"/>
    <property type="project" value="InterPro"/>
</dbReference>
<dbReference type="GO" id="GO:0006633">
    <property type="term" value="P:fatty acid biosynthetic process"/>
    <property type="evidence" value="ECO:0007669"/>
    <property type="project" value="TreeGrafter"/>
</dbReference>
<dbReference type="GO" id="GO:0044550">
    <property type="term" value="P:secondary metabolite biosynthetic process"/>
    <property type="evidence" value="ECO:0007669"/>
    <property type="project" value="TreeGrafter"/>
</dbReference>
<dbReference type="CDD" id="cd05195">
    <property type="entry name" value="enoyl_red"/>
    <property type="match status" value="1"/>
</dbReference>
<dbReference type="CDD" id="cd00833">
    <property type="entry name" value="PKS"/>
    <property type="match status" value="1"/>
</dbReference>
<dbReference type="Gene3D" id="3.40.47.10">
    <property type="match status" value="1"/>
</dbReference>
<dbReference type="Gene3D" id="1.10.1200.10">
    <property type="entry name" value="ACP-like"/>
    <property type="match status" value="1"/>
</dbReference>
<dbReference type="Gene3D" id="3.40.366.10">
    <property type="entry name" value="Malonyl-Coenzyme A Acyl Carrier Protein, domain 2"/>
    <property type="match status" value="1"/>
</dbReference>
<dbReference type="Gene3D" id="3.90.180.10">
    <property type="entry name" value="Medium-chain alcohol dehydrogenases, catalytic domain"/>
    <property type="match status" value="1"/>
</dbReference>
<dbReference type="Gene3D" id="3.40.50.720">
    <property type="entry name" value="NAD(P)-binding Rossmann-like Domain"/>
    <property type="match status" value="3"/>
</dbReference>
<dbReference type="Gene3D" id="3.10.129.110">
    <property type="entry name" value="Polyketide synthase dehydratase"/>
    <property type="match status" value="1"/>
</dbReference>
<dbReference type="Gene3D" id="3.40.50.150">
    <property type="entry name" value="Vaccinia Virus protein VP39"/>
    <property type="match status" value="1"/>
</dbReference>
<dbReference type="InterPro" id="IPR001227">
    <property type="entry name" value="Ac_transferase_dom_sf"/>
</dbReference>
<dbReference type="InterPro" id="IPR036736">
    <property type="entry name" value="ACP-like_sf"/>
</dbReference>
<dbReference type="InterPro" id="IPR014043">
    <property type="entry name" value="Acyl_transferase_dom"/>
</dbReference>
<dbReference type="InterPro" id="IPR016035">
    <property type="entry name" value="Acyl_Trfase/lysoPLipase"/>
</dbReference>
<dbReference type="InterPro" id="IPR013154">
    <property type="entry name" value="ADH-like_N"/>
</dbReference>
<dbReference type="InterPro" id="IPR011032">
    <property type="entry name" value="GroES-like_sf"/>
</dbReference>
<dbReference type="InterPro" id="IPR014031">
    <property type="entry name" value="Ketoacyl_synth_C"/>
</dbReference>
<dbReference type="InterPro" id="IPR014030">
    <property type="entry name" value="Ketoacyl_synth_N"/>
</dbReference>
<dbReference type="InterPro" id="IPR016036">
    <property type="entry name" value="Malonyl_transacylase_ACP-bd"/>
</dbReference>
<dbReference type="InterPro" id="IPR036291">
    <property type="entry name" value="NAD(P)-bd_dom_sf"/>
</dbReference>
<dbReference type="InterPro" id="IPR056501">
    <property type="entry name" value="NAD-bd_HRPKS_sdrA"/>
</dbReference>
<dbReference type="InterPro" id="IPR032821">
    <property type="entry name" value="PKS_assoc"/>
</dbReference>
<dbReference type="InterPro" id="IPR020841">
    <property type="entry name" value="PKS_Beta-ketoAc_synthase_dom"/>
</dbReference>
<dbReference type="InterPro" id="IPR042104">
    <property type="entry name" value="PKS_dehydratase_sf"/>
</dbReference>
<dbReference type="InterPro" id="IPR020807">
    <property type="entry name" value="PKS_DH"/>
</dbReference>
<dbReference type="InterPro" id="IPR049551">
    <property type="entry name" value="PKS_DH_C"/>
</dbReference>
<dbReference type="InterPro" id="IPR049552">
    <property type="entry name" value="PKS_DH_N"/>
</dbReference>
<dbReference type="InterPro" id="IPR020843">
    <property type="entry name" value="PKS_ER"/>
</dbReference>
<dbReference type="InterPro" id="IPR013968">
    <property type="entry name" value="PKS_KR"/>
</dbReference>
<dbReference type="InterPro" id="IPR049900">
    <property type="entry name" value="PKS_mFAS_DH"/>
</dbReference>
<dbReference type="InterPro" id="IPR050091">
    <property type="entry name" value="PKS_NRPS_Biosynth_Enz"/>
</dbReference>
<dbReference type="InterPro" id="IPR020806">
    <property type="entry name" value="PKS_PP-bd"/>
</dbReference>
<dbReference type="InterPro" id="IPR009081">
    <property type="entry name" value="PP-bd_ACP"/>
</dbReference>
<dbReference type="InterPro" id="IPR029063">
    <property type="entry name" value="SAM-dependent_MTases_sf"/>
</dbReference>
<dbReference type="InterPro" id="IPR016039">
    <property type="entry name" value="Thiolase-like"/>
</dbReference>
<dbReference type="PANTHER" id="PTHR43775:SF29">
    <property type="entry name" value="ASPERFURANONE POLYKETIDE SYNTHASE AFOG-RELATED"/>
    <property type="match status" value="1"/>
</dbReference>
<dbReference type="PANTHER" id="PTHR43775">
    <property type="entry name" value="FATTY ACID SYNTHASE"/>
    <property type="match status" value="1"/>
</dbReference>
<dbReference type="Pfam" id="PF00698">
    <property type="entry name" value="Acyl_transf_1"/>
    <property type="match status" value="1"/>
</dbReference>
<dbReference type="Pfam" id="PF08240">
    <property type="entry name" value="ADH_N"/>
    <property type="match status" value="1"/>
</dbReference>
<dbReference type="Pfam" id="PF13602">
    <property type="entry name" value="ADH_zinc_N_2"/>
    <property type="match status" value="1"/>
</dbReference>
<dbReference type="Pfam" id="PF16197">
    <property type="entry name" value="KAsynt_C_assoc"/>
    <property type="match status" value="1"/>
</dbReference>
<dbReference type="Pfam" id="PF00109">
    <property type="entry name" value="ketoacyl-synt"/>
    <property type="match status" value="1"/>
</dbReference>
<dbReference type="Pfam" id="PF02801">
    <property type="entry name" value="Ketoacyl-synt_C"/>
    <property type="match status" value="1"/>
</dbReference>
<dbReference type="Pfam" id="PF08659">
    <property type="entry name" value="KR"/>
    <property type="match status" value="1"/>
</dbReference>
<dbReference type="Pfam" id="PF23114">
    <property type="entry name" value="NAD-bd_HRPKS_sdrA"/>
    <property type="match status" value="1"/>
</dbReference>
<dbReference type="Pfam" id="PF21089">
    <property type="entry name" value="PKS_DH_N"/>
    <property type="match status" value="1"/>
</dbReference>
<dbReference type="Pfam" id="PF00550">
    <property type="entry name" value="PP-binding"/>
    <property type="match status" value="1"/>
</dbReference>
<dbReference type="Pfam" id="PF14765">
    <property type="entry name" value="PS-DH"/>
    <property type="match status" value="1"/>
</dbReference>
<dbReference type="SMART" id="SM00827">
    <property type="entry name" value="PKS_AT"/>
    <property type="match status" value="1"/>
</dbReference>
<dbReference type="SMART" id="SM00826">
    <property type="entry name" value="PKS_DH"/>
    <property type="match status" value="1"/>
</dbReference>
<dbReference type="SMART" id="SM00829">
    <property type="entry name" value="PKS_ER"/>
    <property type="match status" value="1"/>
</dbReference>
<dbReference type="SMART" id="SM00822">
    <property type="entry name" value="PKS_KR"/>
    <property type="match status" value="1"/>
</dbReference>
<dbReference type="SMART" id="SM00825">
    <property type="entry name" value="PKS_KS"/>
    <property type="match status" value="1"/>
</dbReference>
<dbReference type="SMART" id="SM00823">
    <property type="entry name" value="PKS_PP"/>
    <property type="match status" value="1"/>
</dbReference>
<dbReference type="SUPFAM" id="SSF47336">
    <property type="entry name" value="ACP-like"/>
    <property type="match status" value="1"/>
</dbReference>
<dbReference type="SUPFAM" id="SSF52151">
    <property type="entry name" value="FabD/lysophospholipase-like"/>
    <property type="match status" value="1"/>
</dbReference>
<dbReference type="SUPFAM" id="SSF50129">
    <property type="entry name" value="GroES-like"/>
    <property type="match status" value="1"/>
</dbReference>
<dbReference type="SUPFAM" id="SSF51735">
    <property type="entry name" value="NAD(P)-binding Rossmann-fold domains"/>
    <property type="match status" value="2"/>
</dbReference>
<dbReference type="SUPFAM" id="SSF55048">
    <property type="entry name" value="Probable ACP-binding domain of malonyl-CoA ACP transacylase"/>
    <property type="match status" value="1"/>
</dbReference>
<dbReference type="SUPFAM" id="SSF53335">
    <property type="entry name" value="S-adenosyl-L-methionine-dependent methyltransferases"/>
    <property type="match status" value="1"/>
</dbReference>
<dbReference type="SUPFAM" id="SSF53901">
    <property type="entry name" value="Thiolase-like"/>
    <property type="match status" value="1"/>
</dbReference>
<dbReference type="PROSITE" id="PS50075">
    <property type="entry name" value="CARRIER"/>
    <property type="match status" value="1"/>
</dbReference>
<dbReference type="PROSITE" id="PS52004">
    <property type="entry name" value="KS3_2"/>
    <property type="match status" value="1"/>
</dbReference>
<dbReference type="PROSITE" id="PS52019">
    <property type="entry name" value="PKS_MFAS_DH"/>
    <property type="match status" value="1"/>
</dbReference>
<protein>
    <recommendedName>
        <fullName evidence="7">Partially reducing polyketide synthase men1</fullName>
        <shortName evidence="7">R-PKS men1</shortName>
        <ecNumber evidence="6">2.3.1.-</ecNumber>
    </recommendedName>
</protein>